<protein>
    <recommendedName>
        <fullName>Delta(24)-sterol reductase</fullName>
        <ecNumber evidence="2">1.3.1.72</ecNumber>
    </recommendedName>
    <alternativeName>
        <fullName>24-dehydrocholesterol reductase</fullName>
    </alternativeName>
    <alternativeName>
        <fullName>3-beta-hydroxysterol Delta-24-reductase</fullName>
    </alternativeName>
</protein>
<name>DHC24_RAT</name>
<comment type="function">
    <text evidence="2">Catalyzes the reduction of the delta-24 double bond of sterol intermediates during cholesterol biosynthesis. In addition to its cholesterol-synthesizing activity, can protect cells from oxidative stress by reducing caspase 3 activity during apoptosis induced by oxidative stress. Also protects against amyloid-beta peptide-induced apoptosis.</text>
</comment>
<comment type="catalytic activity">
    <reaction evidence="2">
        <text>cholesterol + NADP(+) = desmosterol + NADPH + H(+)</text>
        <dbReference type="Rhea" id="RHEA:36391"/>
        <dbReference type="ChEBI" id="CHEBI:15378"/>
        <dbReference type="ChEBI" id="CHEBI:16113"/>
        <dbReference type="ChEBI" id="CHEBI:17737"/>
        <dbReference type="ChEBI" id="CHEBI:57783"/>
        <dbReference type="ChEBI" id="CHEBI:58349"/>
        <dbReference type="EC" id="1.3.1.72"/>
    </reaction>
    <physiologicalReaction direction="right-to-left" evidence="2">
        <dbReference type="Rhea" id="RHEA:36393"/>
    </physiologicalReaction>
</comment>
<comment type="catalytic activity">
    <reaction evidence="2">
        <text>lanosterol + NADPH + H(+) = 24,25-dihydrolanosterol + NADP(+)</text>
        <dbReference type="Rhea" id="RHEA:33919"/>
        <dbReference type="ChEBI" id="CHEBI:15378"/>
        <dbReference type="ChEBI" id="CHEBI:16521"/>
        <dbReference type="ChEBI" id="CHEBI:28113"/>
        <dbReference type="ChEBI" id="CHEBI:57783"/>
        <dbReference type="ChEBI" id="CHEBI:58349"/>
    </reaction>
    <physiologicalReaction direction="left-to-right" evidence="2">
        <dbReference type="Rhea" id="RHEA:33920"/>
    </physiologicalReaction>
</comment>
<comment type="catalytic activity">
    <reaction evidence="3">
        <text>5alpha-cholest-8-en-3beta-ol + NADP(+) = zymosterol + NADPH + H(+)</text>
        <dbReference type="Rhea" id="RHEA:36399"/>
        <dbReference type="ChEBI" id="CHEBI:15378"/>
        <dbReference type="ChEBI" id="CHEBI:16608"/>
        <dbReference type="ChEBI" id="CHEBI:18252"/>
        <dbReference type="ChEBI" id="CHEBI:57783"/>
        <dbReference type="ChEBI" id="CHEBI:58349"/>
        <dbReference type="EC" id="1.3.1.72"/>
    </reaction>
    <physiologicalReaction direction="right-to-left" evidence="3">
        <dbReference type="Rhea" id="RHEA:36401"/>
    </physiologicalReaction>
</comment>
<comment type="cofactor">
    <cofactor evidence="1">
        <name>FAD</name>
        <dbReference type="ChEBI" id="CHEBI:57692"/>
    </cofactor>
</comment>
<comment type="pathway">
    <text evidence="2">Steroid biosynthesis; cholesterol biosynthesis.</text>
</comment>
<comment type="subunit">
    <text evidence="2">Interacts with DHCR7; this interaction regulates DHCR7 activity.</text>
</comment>
<comment type="subcellular location">
    <subcellularLocation>
        <location evidence="2">Endoplasmic reticulum membrane</location>
        <topology evidence="4">Single-pass membrane protein</topology>
    </subcellularLocation>
    <subcellularLocation>
        <location evidence="2">Golgi apparatus membrane</location>
        <topology evidence="4">Single-pass membrane protein</topology>
    </subcellularLocation>
</comment>
<comment type="similarity">
    <text evidence="6">Belongs to the FAD-binding oxidoreductase/transferase type 4 family.</text>
</comment>
<organism>
    <name type="scientific">Rattus norvegicus</name>
    <name type="common">Rat</name>
    <dbReference type="NCBI Taxonomy" id="10116"/>
    <lineage>
        <taxon>Eukaryota</taxon>
        <taxon>Metazoa</taxon>
        <taxon>Chordata</taxon>
        <taxon>Craniata</taxon>
        <taxon>Vertebrata</taxon>
        <taxon>Euteleostomi</taxon>
        <taxon>Mammalia</taxon>
        <taxon>Eutheria</taxon>
        <taxon>Euarchontoglires</taxon>
        <taxon>Glires</taxon>
        <taxon>Rodentia</taxon>
        <taxon>Myomorpha</taxon>
        <taxon>Muroidea</taxon>
        <taxon>Muridae</taxon>
        <taxon>Murinae</taxon>
        <taxon>Rattus</taxon>
    </lineage>
</organism>
<gene>
    <name type="primary">Dhcr24</name>
</gene>
<evidence type="ECO:0000250" key="1"/>
<evidence type="ECO:0000250" key="2">
    <source>
        <dbReference type="UniProtKB" id="Q15392"/>
    </source>
</evidence>
<evidence type="ECO:0000250" key="3">
    <source>
        <dbReference type="UniProtKB" id="Q8VCH6"/>
    </source>
</evidence>
<evidence type="ECO:0000255" key="4"/>
<evidence type="ECO:0000255" key="5">
    <source>
        <dbReference type="PROSITE-ProRule" id="PRU00718"/>
    </source>
</evidence>
<evidence type="ECO:0000305" key="6"/>
<proteinExistence type="evidence at transcript level"/>
<accession>Q5BQE6</accession>
<sequence>MEPAVSLAVCALLFLLWVRVKGLEFVLIHQRWVFVCLFLLPLSLIFDIYYYVRAWVVFKLSSAPRLHEQRVQDIQKQVREWKEQGSKTFMCTGRPGWLTVSLRVGKYKKTHKNIMINLMDILEVDTKKQIVRVEPLVSMGQVTALLNSIGWTLPVLPELDDLTVGGLIMGTGIESSSHKYGLFQHICTAYELILADGSFVRCTPSENSDLFYAVPWSCGTLGFLVAAEIRIIPAKKYVKLRFEPVRGLEAICEKFTHESQRLENHFVEGLLYSLDEAVIMTGVMTDDVEPSKLNSIGSYYKPWFFKHVENYLKTNREGLEYIPLRHYYHRHTRSIFWELQDIIPFGNNPIFRYLFGWMVPPKISLLKLTQGETLRKLYEQHHVVQDMLVPMKCLSQALHTFQNDIHVYPIWLCPFILPSQPGLVHPKGDEAELYVDIGAYGEPRVKHFEARSCMRQLEKFVRSVHGFQMLYADCYMNREEFWEMFDGSLYHKLRKQLGCQDAFPEVYDKICKAARH</sequence>
<keyword id="KW-0152">Cholesterol biosynthesis</keyword>
<keyword id="KW-0153">Cholesterol metabolism</keyword>
<keyword id="KW-0256">Endoplasmic reticulum</keyword>
<keyword id="KW-0274">FAD</keyword>
<keyword id="KW-0285">Flavoprotein</keyword>
<keyword id="KW-0333">Golgi apparatus</keyword>
<keyword id="KW-0444">Lipid biosynthesis</keyword>
<keyword id="KW-0443">Lipid metabolism</keyword>
<keyword id="KW-0472">Membrane</keyword>
<keyword id="KW-0521">NADP</keyword>
<keyword id="KW-0560">Oxidoreductase</keyword>
<keyword id="KW-1185">Reference proteome</keyword>
<keyword id="KW-0732">Signal</keyword>
<keyword id="KW-0752">Steroid biosynthesis</keyword>
<keyword id="KW-0753">Steroid metabolism</keyword>
<keyword id="KW-0756">Sterol biosynthesis</keyword>
<keyword id="KW-1207">Sterol metabolism</keyword>
<keyword id="KW-0812">Transmembrane</keyword>
<keyword id="KW-1133">Transmembrane helix</keyword>
<dbReference type="EC" id="1.3.1.72" evidence="2"/>
<dbReference type="EMBL" id="AY921220">
    <property type="protein sequence ID" value="AAX29968.2"/>
    <property type="molecule type" value="mRNA"/>
</dbReference>
<dbReference type="RefSeq" id="NP_001073617.2">
    <property type="nucleotide sequence ID" value="NM_001080148.2"/>
</dbReference>
<dbReference type="SMR" id="Q5BQE6"/>
<dbReference type="FunCoup" id="Q5BQE6">
    <property type="interactions" value="302"/>
</dbReference>
<dbReference type="STRING" id="10116.ENSRNOP00000009402"/>
<dbReference type="PhosphoSitePlus" id="Q5BQE6"/>
<dbReference type="PaxDb" id="10116-ENSRNOP00000009402"/>
<dbReference type="Ensembl" id="ENSRNOT00000009402.7">
    <property type="protein sequence ID" value="ENSRNOP00000009402.4"/>
    <property type="gene ID" value="ENSRNOG00000006787.7"/>
</dbReference>
<dbReference type="GeneID" id="298298"/>
<dbReference type="KEGG" id="rno:298298"/>
<dbReference type="UCSC" id="RGD:1306529">
    <property type="organism name" value="rat"/>
</dbReference>
<dbReference type="AGR" id="RGD:1306529"/>
<dbReference type="CTD" id="1718"/>
<dbReference type="RGD" id="1306529">
    <property type="gene designation" value="Dhcr24"/>
</dbReference>
<dbReference type="eggNOG" id="KOG1262">
    <property type="taxonomic scope" value="Eukaryota"/>
</dbReference>
<dbReference type="GeneTree" id="ENSGT00390000008338"/>
<dbReference type="HOGENOM" id="CLU_025883_4_0_1"/>
<dbReference type="InParanoid" id="Q5BQE6"/>
<dbReference type="OMA" id="WVGRSAF"/>
<dbReference type="OrthoDB" id="415825at2759"/>
<dbReference type="PhylomeDB" id="Q5BQE6"/>
<dbReference type="TreeFam" id="TF313170"/>
<dbReference type="BRENDA" id="1.3.1.72">
    <property type="organism ID" value="5301"/>
</dbReference>
<dbReference type="Reactome" id="R-RNO-191273">
    <property type="pathway name" value="Cholesterol biosynthesis"/>
</dbReference>
<dbReference type="Reactome" id="R-RNO-6807047">
    <property type="pathway name" value="Cholesterol biosynthesis via desmosterol"/>
</dbReference>
<dbReference type="Reactome" id="R-RNO-6807062">
    <property type="pathway name" value="Cholesterol biosynthesis via lathosterol"/>
</dbReference>
<dbReference type="UniPathway" id="UPA00063"/>
<dbReference type="PRO" id="PR:Q5BQE6"/>
<dbReference type="Proteomes" id="UP000002494">
    <property type="component" value="Chromosome 5"/>
</dbReference>
<dbReference type="Bgee" id="ENSRNOG00000006787">
    <property type="expression patterns" value="Expressed in liver and 19 other cell types or tissues"/>
</dbReference>
<dbReference type="GO" id="GO:0005737">
    <property type="term" value="C:cytoplasm"/>
    <property type="evidence" value="ECO:0000318"/>
    <property type="project" value="GO_Central"/>
</dbReference>
<dbReference type="GO" id="GO:0005783">
    <property type="term" value="C:endoplasmic reticulum"/>
    <property type="evidence" value="ECO:0000250"/>
    <property type="project" value="UniProtKB"/>
</dbReference>
<dbReference type="GO" id="GO:0005789">
    <property type="term" value="C:endoplasmic reticulum membrane"/>
    <property type="evidence" value="ECO:0007669"/>
    <property type="project" value="UniProtKB-SubCell"/>
</dbReference>
<dbReference type="GO" id="GO:0000139">
    <property type="term" value="C:Golgi membrane"/>
    <property type="evidence" value="ECO:0007669"/>
    <property type="project" value="UniProtKB-SubCell"/>
</dbReference>
<dbReference type="GO" id="GO:0005634">
    <property type="term" value="C:nucleus"/>
    <property type="evidence" value="ECO:0000250"/>
    <property type="project" value="UniProtKB"/>
</dbReference>
<dbReference type="GO" id="GO:0000246">
    <property type="term" value="F:Delta24(24-1) sterol reductase activity"/>
    <property type="evidence" value="ECO:0000266"/>
    <property type="project" value="RGD"/>
</dbReference>
<dbReference type="GO" id="GO:0050614">
    <property type="term" value="F:Delta24-sterol reductase activity"/>
    <property type="evidence" value="ECO:0000266"/>
    <property type="project" value="RGD"/>
</dbReference>
<dbReference type="GO" id="GO:0019899">
    <property type="term" value="F:enzyme binding"/>
    <property type="evidence" value="ECO:0000250"/>
    <property type="project" value="UniProtKB"/>
</dbReference>
<dbReference type="GO" id="GO:0071949">
    <property type="term" value="F:FAD binding"/>
    <property type="evidence" value="ECO:0007669"/>
    <property type="project" value="InterPro"/>
</dbReference>
<dbReference type="GO" id="GO:0016491">
    <property type="term" value="F:oxidoreductase activity"/>
    <property type="evidence" value="ECO:0000303"/>
    <property type="project" value="RGD"/>
</dbReference>
<dbReference type="GO" id="GO:0016628">
    <property type="term" value="F:oxidoreductase activity, acting on the CH-CH group of donors, NAD or NADP as acceptor"/>
    <property type="evidence" value="ECO:0000266"/>
    <property type="project" value="RGD"/>
</dbReference>
<dbReference type="GO" id="GO:0042605">
    <property type="term" value="F:peptide antigen binding"/>
    <property type="evidence" value="ECO:0000250"/>
    <property type="project" value="UniProtKB"/>
</dbReference>
<dbReference type="GO" id="GO:0042987">
    <property type="term" value="P:amyloid precursor protein catabolic process"/>
    <property type="evidence" value="ECO:0000266"/>
    <property type="project" value="RGD"/>
</dbReference>
<dbReference type="GO" id="GO:0006695">
    <property type="term" value="P:cholesterol biosynthetic process"/>
    <property type="evidence" value="ECO:0000250"/>
    <property type="project" value="UniProtKB"/>
</dbReference>
<dbReference type="GO" id="GO:0033489">
    <property type="term" value="P:cholesterol biosynthetic process via desmosterol"/>
    <property type="evidence" value="ECO:0000266"/>
    <property type="project" value="RGD"/>
</dbReference>
<dbReference type="GO" id="GO:0008203">
    <property type="term" value="P:cholesterol metabolic process"/>
    <property type="evidence" value="ECO:0000266"/>
    <property type="project" value="RGD"/>
</dbReference>
<dbReference type="GO" id="GO:0030539">
    <property type="term" value="P:male genitalia development"/>
    <property type="evidence" value="ECO:0000266"/>
    <property type="project" value="RGD"/>
</dbReference>
<dbReference type="GO" id="GO:0061024">
    <property type="term" value="P:membrane organization"/>
    <property type="evidence" value="ECO:0000266"/>
    <property type="project" value="RGD"/>
</dbReference>
<dbReference type="GO" id="GO:0008285">
    <property type="term" value="P:negative regulation of cell population proliferation"/>
    <property type="evidence" value="ECO:0000315"/>
    <property type="project" value="RGD"/>
</dbReference>
<dbReference type="GO" id="GO:0031639">
    <property type="term" value="P:plasminogen activation"/>
    <property type="evidence" value="ECO:0000266"/>
    <property type="project" value="RGD"/>
</dbReference>
<dbReference type="GO" id="GO:0008104">
    <property type="term" value="P:protein localization"/>
    <property type="evidence" value="ECO:0000266"/>
    <property type="project" value="RGD"/>
</dbReference>
<dbReference type="GO" id="GO:0007265">
    <property type="term" value="P:Ras protein signal transduction"/>
    <property type="evidence" value="ECO:0000315"/>
    <property type="project" value="RGD"/>
</dbReference>
<dbReference type="GO" id="GO:0009725">
    <property type="term" value="P:response to hormone"/>
    <property type="evidence" value="ECO:0000270"/>
    <property type="project" value="RGD"/>
</dbReference>
<dbReference type="GO" id="GO:0043588">
    <property type="term" value="P:skin development"/>
    <property type="evidence" value="ECO:0000250"/>
    <property type="project" value="UniProtKB"/>
</dbReference>
<dbReference type="GO" id="GO:0008202">
    <property type="term" value="P:steroid metabolic process"/>
    <property type="evidence" value="ECO:0000315"/>
    <property type="project" value="RGD"/>
</dbReference>
<dbReference type="GO" id="GO:0016125">
    <property type="term" value="P:sterol metabolic process"/>
    <property type="evidence" value="ECO:0000266"/>
    <property type="project" value="RGD"/>
</dbReference>
<dbReference type="GO" id="GO:0009888">
    <property type="term" value="P:tissue development"/>
    <property type="evidence" value="ECO:0000250"/>
    <property type="project" value="UniProtKB"/>
</dbReference>
<dbReference type="FunFam" id="3.30.465.10:FF:000032">
    <property type="entry name" value="Delta(24)-sterol reductase"/>
    <property type="match status" value="1"/>
</dbReference>
<dbReference type="Gene3D" id="3.30.465.10">
    <property type="match status" value="1"/>
</dbReference>
<dbReference type="InterPro" id="IPR040165">
    <property type="entry name" value="Diminuto-like"/>
</dbReference>
<dbReference type="InterPro" id="IPR016166">
    <property type="entry name" value="FAD-bd_PCMH"/>
</dbReference>
<dbReference type="InterPro" id="IPR036318">
    <property type="entry name" value="FAD-bd_PCMH-like_sf"/>
</dbReference>
<dbReference type="InterPro" id="IPR016169">
    <property type="entry name" value="FAD-bd_PCMH_sub2"/>
</dbReference>
<dbReference type="InterPro" id="IPR006094">
    <property type="entry name" value="Oxid_FAD_bind_N"/>
</dbReference>
<dbReference type="PANTHER" id="PTHR10801">
    <property type="entry name" value="24-DEHYDROCHOLESTEROL REDUCTASE"/>
    <property type="match status" value="1"/>
</dbReference>
<dbReference type="PANTHER" id="PTHR10801:SF0">
    <property type="entry name" value="DELTA(24)-STEROL REDUCTASE"/>
    <property type="match status" value="1"/>
</dbReference>
<dbReference type="Pfam" id="PF01565">
    <property type="entry name" value="FAD_binding_4"/>
    <property type="match status" value="1"/>
</dbReference>
<dbReference type="SUPFAM" id="SSF56176">
    <property type="entry name" value="FAD-binding/transporter-associated domain-like"/>
    <property type="match status" value="1"/>
</dbReference>
<dbReference type="PROSITE" id="PS51387">
    <property type="entry name" value="FAD_PCMH"/>
    <property type="match status" value="1"/>
</dbReference>
<reference key="1">
    <citation type="submission" date="2005-02" db="EMBL/GenBank/DDBJ databases">
        <authorList>
            <person name="Samara A."/>
            <person name="Maggi R."/>
        </authorList>
    </citation>
    <scope>NUCLEOTIDE SEQUENCE [MRNA]</scope>
    <source>
        <strain>IGS BR</strain>
    </source>
</reference>
<feature type="signal peptide" evidence="4">
    <location>
        <begin position="1"/>
        <end position="22"/>
    </location>
</feature>
<feature type="chain" id="PRO_0000320301" description="Delta(24)-sterol reductase">
    <location>
        <begin position="23"/>
        <end position="516"/>
    </location>
</feature>
<feature type="topological domain" description="Lumenal" evidence="2">
    <location>
        <begin position="23"/>
        <end position="31"/>
    </location>
</feature>
<feature type="transmembrane region" description="Helical" evidence="4">
    <location>
        <begin position="32"/>
        <end position="52"/>
    </location>
</feature>
<feature type="topological domain" description="Cytoplasmic" evidence="2">
    <location>
        <begin position="53"/>
        <end position="516"/>
    </location>
</feature>
<feature type="domain" description="FAD-binding PCMH-type" evidence="5">
    <location>
        <begin position="58"/>
        <end position="234"/>
    </location>
</feature>
<feature type="binding site" evidence="4">
    <location>
        <begin position="163"/>
        <end position="175"/>
    </location>
    <ligand>
        <name>FAD</name>
        <dbReference type="ChEBI" id="CHEBI:57692"/>
    </ligand>
</feature>
<feature type="site" description="Cleavage; by caspase" evidence="4">
    <location>
        <begin position="122"/>
        <end position="123"/>
    </location>
</feature>
<feature type="site" description="Cleavage; by caspase" evidence="4">
    <location>
        <begin position="383"/>
        <end position="384"/>
    </location>
</feature>